<feature type="chain" id="PRO_0000057825" description="Gap junction gamma-1 protein">
    <location>
        <begin position="1"/>
        <end position="396"/>
    </location>
</feature>
<feature type="topological domain" description="Cytoplasmic" evidence="2">
    <location>
        <begin position="1"/>
        <end position="22"/>
    </location>
</feature>
<feature type="transmembrane region" description="Helical" evidence="2">
    <location>
        <begin position="23"/>
        <end position="45"/>
    </location>
</feature>
<feature type="topological domain" description="Extracellular" evidence="2">
    <location>
        <begin position="46"/>
        <end position="75"/>
    </location>
</feature>
<feature type="transmembrane region" description="Helical" evidence="2">
    <location>
        <begin position="76"/>
        <end position="95"/>
    </location>
</feature>
<feature type="topological domain" description="Cytoplasmic" evidence="2">
    <location>
        <begin position="96"/>
        <end position="175"/>
    </location>
</feature>
<feature type="transmembrane region" description="Helical" evidence="2">
    <location>
        <begin position="176"/>
        <end position="198"/>
    </location>
</feature>
<feature type="topological domain" description="Extracellular" evidence="2">
    <location>
        <begin position="199"/>
        <end position="228"/>
    </location>
</feature>
<feature type="transmembrane region" description="Helical" evidence="2">
    <location>
        <begin position="229"/>
        <end position="248"/>
    </location>
</feature>
<feature type="topological domain" description="Cytoplasmic" evidence="2">
    <location>
        <begin position="249"/>
        <end position="396"/>
    </location>
</feature>
<feature type="region of interest" description="Disordered" evidence="3">
    <location>
        <begin position="145"/>
        <end position="165"/>
    </location>
</feature>
<feature type="region of interest" description="Disordered" evidence="3">
    <location>
        <begin position="355"/>
        <end position="396"/>
    </location>
</feature>
<feature type="compositionally biased region" description="Basic and acidic residues" evidence="3">
    <location>
        <begin position="147"/>
        <end position="156"/>
    </location>
</feature>
<feature type="compositionally biased region" description="Low complexity" evidence="3">
    <location>
        <begin position="373"/>
        <end position="396"/>
    </location>
</feature>
<feature type="sequence conflict" description="In Ref. 2; AAR99071." evidence="4" ref="2">
    <original>A</original>
    <variation>V</variation>
    <location>
        <position position="30"/>
    </location>
</feature>
<feature type="sequence conflict" description="In Ref. 2; AAR99071." evidence="4" ref="2">
    <original>A</original>
    <variation>V</variation>
    <location>
        <position position="34"/>
    </location>
</feature>
<feature type="sequence conflict" description="In Ref. 2; AAR99071." evidence="4" ref="2">
    <original>V</original>
    <variation>A</variation>
    <location>
        <position position="345"/>
    </location>
</feature>
<feature type="sequence conflict" description="In Ref. 2; AAR99071." evidence="4" ref="2">
    <original>N</original>
    <variation>T</variation>
    <location>
        <position position="392"/>
    </location>
</feature>
<protein>
    <recommendedName>
        <fullName>Gap junction gamma-1 protein</fullName>
    </recommendedName>
    <alternativeName>
        <fullName>Connexin-45</fullName>
        <shortName>Cx45</shortName>
    </alternativeName>
    <alternativeName>
        <fullName>Gap junction alpha-7 protein</fullName>
    </alternativeName>
</protein>
<organism>
    <name type="scientific">Canis lupus familiaris</name>
    <name type="common">Dog</name>
    <name type="synonym">Canis familiaris</name>
    <dbReference type="NCBI Taxonomy" id="9615"/>
    <lineage>
        <taxon>Eukaryota</taxon>
        <taxon>Metazoa</taxon>
        <taxon>Chordata</taxon>
        <taxon>Craniata</taxon>
        <taxon>Vertebrata</taxon>
        <taxon>Euteleostomi</taxon>
        <taxon>Mammalia</taxon>
        <taxon>Eutheria</taxon>
        <taxon>Laurasiatheria</taxon>
        <taxon>Carnivora</taxon>
        <taxon>Caniformia</taxon>
        <taxon>Canidae</taxon>
        <taxon>Canis</taxon>
    </lineage>
</organism>
<accession>P28228</accession>
<accession>Q5J7U4</accession>
<proteinExistence type="inferred from homology"/>
<dbReference type="EMBL" id="M81348">
    <property type="protein sequence ID" value="AAA30839.1"/>
    <property type="molecule type" value="Genomic_DNA"/>
</dbReference>
<dbReference type="EMBL" id="AY438630">
    <property type="protein sequence ID" value="AAR99071.1"/>
    <property type="molecule type" value="Genomic_DNA"/>
</dbReference>
<dbReference type="PIR" id="B49024">
    <property type="entry name" value="B49024"/>
</dbReference>
<dbReference type="RefSeq" id="NP_001018648.1">
    <property type="nucleotide sequence ID" value="NM_001020812.2"/>
</dbReference>
<dbReference type="RefSeq" id="XP_005624400.1">
    <property type="nucleotide sequence ID" value="XM_005624343.2"/>
</dbReference>
<dbReference type="RefSeq" id="XP_005624401.1">
    <property type="nucleotide sequence ID" value="XM_005624344.2"/>
</dbReference>
<dbReference type="SMR" id="P28228"/>
<dbReference type="FunCoup" id="P28228">
    <property type="interactions" value="93"/>
</dbReference>
<dbReference type="STRING" id="9615.ENSCAFP00000020776"/>
<dbReference type="PaxDb" id="9612-ENSCAFP00000020776"/>
<dbReference type="GeneID" id="490936"/>
<dbReference type="KEGG" id="cfa:490936"/>
<dbReference type="CTD" id="10052"/>
<dbReference type="eggNOG" id="ENOG502QV2G">
    <property type="taxonomic scope" value="Eukaryota"/>
</dbReference>
<dbReference type="InParanoid" id="P28228"/>
<dbReference type="OrthoDB" id="8875898at2759"/>
<dbReference type="TreeFam" id="TF329606"/>
<dbReference type="Proteomes" id="UP000002254">
    <property type="component" value="Unplaced"/>
</dbReference>
<dbReference type="Proteomes" id="UP000694429">
    <property type="component" value="Unplaced"/>
</dbReference>
<dbReference type="Proteomes" id="UP000694542">
    <property type="component" value="Unplaced"/>
</dbReference>
<dbReference type="Proteomes" id="UP000805418">
    <property type="component" value="Unplaced"/>
</dbReference>
<dbReference type="GO" id="GO:0005922">
    <property type="term" value="C:connexin complex"/>
    <property type="evidence" value="ECO:0000314"/>
    <property type="project" value="BHF-UCL"/>
</dbReference>
<dbReference type="GO" id="GO:0005243">
    <property type="term" value="F:gap junction channel activity"/>
    <property type="evidence" value="ECO:0000318"/>
    <property type="project" value="GO_Central"/>
</dbReference>
<dbReference type="GO" id="GO:0007267">
    <property type="term" value="P:cell-cell signaling"/>
    <property type="evidence" value="ECO:0000318"/>
    <property type="project" value="GO_Central"/>
</dbReference>
<dbReference type="FunFam" id="1.20.1440.80:FF:000003">
    <property type="entry name" value="Gap junction protein"/>
    <property type="match status" value="1"/>
</dbReference>
<dbReference type="Gene3D" id="1.20.1440.80">
    <property type="entry name" value="Gap junction channel protein cysteine-rich domain"/>
    <property type="match status" value="1"/>
</dbReference>
<dbReference type="InterPro" id="IPR000500">
    <property type="entry name" value="Connexin"/>
</dbReference>
<dbReference type="InterPro" id="IPR002265">
    <property type="entry name" value="Connexin45"/>
</dbReference>
<dbReference type="InterPro" id="IPR019570">
    <property type="entry name" value="Connexin_CCC"/>
</dbReference>
<dbReference type="InterPro" id="IPR017990">
    <property type="entry name" value="Connexin_CS"/>
</dbReference>
<dbReference type="InterPro" id="IPR013092">
    <property type="entry name" value="Connexin_N"/>
</dbReference>
<dbReference type="InterPro" id="IPR038359">
    <property type="entry name" value="Connexin_N_sf"/>
</dbReference>
<dbReference type="PANTHER" id="PTHR11984">
    <property type="entry name" value="CONNEXIN"/>
    <property type="match status" value="1"/>
</dbReference>
<dbReference type="PANTHER" id="PTHR11984:SF6">
    <property type="entry name" value="GAP JUNCTION GAMMA-1 PROTEIN"/>
    <property type="match status" value="1"/>
</dbReference>
<dbReference type="Pfam" id="PF00029">
    <property type="entry name" value="Connexin"/>
    <property type="match status" value="1"/>
</dbReference>
<dbReference type="PRINTS" id="PR00206">
    <property type="entry name" value="CONNEXIN"/>
</dbReference>
<dbReference type="PRINTS" id="PR01136">
    <property type="entry name" value="CONNEXINA6"/>
</dbReference>
<dbReference type="SMART" id="SM00037">
    <property type="entry name" value="CNX"/>
    <property type="match status" value="1"/>
</dbReference>
<dbReference type="SMART" id="SM01089">
    <property type="entry name" value="Connexin_CCC"/>
    <property type="match status" value="1"/>
</dbReference>
<dbReference type="PROSITE" id="PS00407">
    <property type="entry name" value="CONNEXINS_1"/>
    <property type="match status" value="1"/>
</dbReference>
<dbReference type="PROSITE" id="PS00408">
    <property type="entry name" value="CONNEXINS_2"/>
    <property type="match status" value="1"/>
</dbReference>
<evidence type="ECO:0000250" key="1"/>
<evidence type="ECO:0000255" key="2"/>
<evidence type="ECO:0000256" key="3">
    <source>
        <dbReference type="SAM" id="MobiDB-lite"/>
    </source>
</evidence>
<evidence type="ECO:0000305" key="4"/>
<keyword id="KW-0965">Cell junction</keyword>
<keyword id="KW-1003">Cell membrane</keyword>
<keyword id="KW-0303">Gap junction</keyword>
<keyword id="KW-0472">Membrane</keyword>
<keyword id="KW-1185">Reference proteome</keyword>
<keyword id="KW-0812">Transmembrane</keyword>
<keyword id="KW-1133">Transmembrane helix</keyword>
<gene>
    <name type="primary">GJC1</name>
    <name type="synonym">GJA7</name>
</gene>
<sequence length="396" mass="45533">MSWSFLTRLLEEIHNHSTFVGKIWLTVLIAFRIALTAVGGESIYYDEQSKFVCNTEQPGCENVCYDAFAPLSHVRFWVFQIILVATPSVMYLGYAIHKIAKMEHGEADKKAARSKPYAMRWKQHRALEETEEDHEEDPMMYPEMELESEKENKEQNQPKPKHDGRRRIREDGLMKIYVLQLLARTVFEVGFLIGQYFLYGFQVHPFYVCSRLPCPHKIDCFISRPTEKTIFLLIMYGVTGLCLLLNIWEMLHLGFGTIRDSLNSKRRELEDPGAYNYPFTWNTPSAPPGYNIAVKPDQIQYTELSNAKIAYKQNKANIAQEQQYGSHEENLPADLETLQREIKMVQERLDLAIQAYSHQNNPHGPREKKAKVGSKAGSNKSSASSKSGDGKNSVWI</sequence>
<comment type="function">
    <text>One gap junction consists of a cluster of closely packed pairs of transmembrane channels, the connexons, through which materials of low MW diffuse from one cell to a neighboring cell.</text>
</comment>
<comment type="subunit">
    <text evidence="1">A connexon is composed of a hexamer of connexins. Interacts with CNST (By similarity).</text>
</comment>
<comment type="subcellular location">
    <subcellularLocation>
        <location>Cell membrane</location>
        <topology>Multi-pass membrane protein</topology>
    </subcellularLocation>
    <subcellularLocation>
        <location>Cell junction</location>
        <location>Gap junction</location>
    </subcellularLocation>
</comment>
<comment type="similarity">
    <text evidence="4">Belongs to the connexin family. Gamma-type subfamily.</text>
</comment>
<name>CXG1_CANLF</name>
<reference key="1">
    <citation type="journal article" date="1992" name="Circ. Res.">
        <title>Cardiac myocytes express multiple gap junction proteins.</title>
        <authorList>
            <person name="Kanter H.L."/>
            <person name="Saffitz J.E."/>
            <person name="Beyer E.C."/>
        </authorList>
    </citation>
    <scope>NUCLEOTIDE SEQUENCE [GENOMIC DNA]</scope>
</reference>
<reference key="2">
    <citation type="submission" date="2003-10" db="EMBL/GenBank/DDBJ databases">
        <title>Genome-wide scan for conotruncal heart defect loci in a canine model.</title>
        <authorList>
            <person name="Werner P."/>
            <person name="Raducha M.G."/>
            <person name="Prociuk U."/>
            <person name="Ostrander E.A."/>
            <person name="Spielman R.S."/>
            <person name="Kirkness E.F."/>
            <person name="Henthorn P.S."/>
            <person name="Patterson D.F."/>
        </authorList>
    </citation>
    <scope>NUCLEOTIDE SEQUENCE [GENOMIC DNA]</scope>
</reference>